<sequence>MTPALNSLSQRIAARLSSSQRDDHYLHNDFHALASAALDMEKRFDKAEKIPLPPQKMRLAALRRLRLAQELTEREWRMVFYGLADNDPSYPDQPVLLEDDTFFPEVNNAIKKRLETKTLKRRDWAALCSSYFAYQNPSPETNPHWCVLRGHIAQGYMVVKAAIRREKSWMKTIEFYHDIFTPQAGGVISRQLLAGESNSLSSLEKIAQIPDSSWLWKRIFTVLLAQLDTLDDPQFLDKISWLLGLAAQWVRFRDDIMTATLTRYYHSIYRDQAHSALKQAALEYWDNPQLKSQQNKWHQYVSEPVAAMVRGWLAKQDLMHFFELLRGNGDVDQARLHYWLRFANQMGFTRIVMGTDAWQDRGSDFVKFREENKGRLSYLRGGRNFDNAMIMQINDYLFVEFSGTGNAMYAYRIGHAPFNPESRTLDINIHLKDKGRCVLRLPHTPRAEGYNKVRITGWMLKYDDELRQLGIRWMAEEAIKFVDKKASSPASMSDIKIINPLRDTAIQHLVEGSSCIVSDNRQKGGVLSVQLNTPDDTIERELLRLGFAPVAKEPHRYWIK</sequence>
<dbReference type="EMBL" id="CP000800">
    <property type="protein sequence ID" value="ABV16709.1"/>
    <property type="status" value="ALT_INIT"/>
    <property type="molecule type" value="Genomic_DNA"/>
</dbReference>
<dbReference type="RefSeq" id="WP_000186585.1">
    <property type="nucleotide sequence ID" value="NC_009801.1"/>
</dbReference>
<dbReference type="SMR" id="A7ZI08"/>
<dbReference type="GeneID" id="75205717"/>
<dbReference type="KEGG" id="ecw:EcE24377A_0283"/>
<dbReference type="HOGENOM" id="CLU_035807_0_0_6"/>
<dbReference type="Proteomes" id="UP000001122">
    <property type="component" value="Chromosome"/>
</dbReference>
<dbReference type="GO" id="GO:0051607">
    <property type="term" value="P:defense response to virus"/>
    <property type="evidence" value="ECO:0007669"/>
    <property type="project" value="UniProtKB-KW"/>
</dbReference>
<dbReference type="InterPro" id="IPR049659">
    <property type="entry name" value="ZorC-like_t1"/>
</dbReference>
<dbReference type="InterPro" id="IPR028943">
    <property type="entry name" value="ZorC_EH_Signature_dom"/>
</dbReference>
<dbReference type="NCBIfam" id="NF041789">
    <property type="entry name" value="anti-phage_ZorC"/>
    <property type="match status" value="1"/>
</dbReference>
<dbReference type="Pfam" id="PF15611">
    <property type="entry name" value="EH_Signature"/>
    <property type="match status" value="1"/>
</dbReference>
<protein>
    <recommendedName>
        <fullName evidence="2">Zorya protein ZorC</fullName>
    </recommendedName>
</protein>
<feature type="chain" id="PRO_0000456342" description="Zorya protein ZorC">
    <location>
        <begin position="1"/>
        <end position="560"/>
    </location>
</feature>
<feature type="mutagenesis site" description="No longer resistant to SECphi27; when associated with A-443." evidence="1">
    <original>E</original>
    <variation>A</variation>
    <location>
        <position position="400"/>
    </location>
</feature>
<feature type="mutagenesis site" description="No longer resistant to SECphi27; when associated with A-400." evidence="1">
    <original>H</original>
    <variation>A</variation>
    <location>
        <position position="443"/>
    </location>
</feature>
<keyword id="KW-0051">Antiviral defense</keyword>
<keyword id="KW-1185">Reference proteome</keyword>
<comment type="function">
    <text evidence="1 3">Component of antiviral defense system Zorya type I, composed of ZorA, ZorB, ZorC and ZorD. Expression of Zorya type I in E.coli (strain MG1655) confers 10,000-fold resistance to phage SECphi27, 100-fold resistance to lambda, and 10-fold resistance to T7. While most T7 infected Zorya-containing cells undergo abortive infection, a minority produce viable phage progeny. These eventually accumulate to a high multiplicity of infection, leading to culture collapse by 2 hours after initial infection (PubMed:29371424). ZorA and ZorB probably assemble in the cell inner membrane and exert their effect there (Probable).</text>
</comment>
<comment type="disruption phenotype">
    <text evidence="1">When this gene is missing the Zorya system does not confer resistance to SECphi27 in E.coli.</text>
</comment>
<comment type="sequence caution" evidence="3">
    <conflict type="erroneous initiation">
        <sequence resource="EMBL-CDS" id="ABV16709"/>
    </conflict>
    <text>Extended N-terminus.</text>
</comment>
<organism>
    <name type="scientific">Escherichia coli O139:H28 (strain E24377A / ETEC)</name>
    <dbReference type="NCBI Taxonomy" id="331111"/>
    <lineage>
        <taxon>Bacteria</taxon>
        <taxon>Pseudomonadati</taxon>
        <taxon>Pseudomonadota</taxon>
        <taxon>Gammaproteobacteria</taxon>
        <taxon>Enterobacterales</taxon>
        <taxon>Enterobacteriaceae</taxon>
        <taxon>Escherichia</taxon>
    </lineage>
</organism>
<accession>A7ZI08</accession>
<reference evidence="4" key="1">
    <citation type="journal article" date="2008" name="J. Bacteriol.">
        <title>The pangenome structure of Escherichia coli: comparative genomic analysis of E. coli commensal and pathogenic isolates.</title>
        <authorList>
            <person name="Rasko D.A."/>
            <person name="Rosovitz M.J."/>
            <person name="Myers G.S.A."/>
            <person name="Mongodin E.F."/>
            <person name="Fricke W.F."/>
            <person name="Gajer P."/>
            <person name="Crabtree J."/>
            <person name="Sebaihia M."/>
            <person name="Thomson N.R."/>
            <person name="Chaudhuri R."/>
            <person name="Henderson I.R."/>
            <person name="Sperandio V."/>
            <person name="Ravel J."/>
        </authorList>
    </citation>
    <scope>NUCLEOTIDE SEQUENCE [LARGE SCALE GENOMIC DNA]</scope>
    <source>
        <strain>E24377A / ETEC</strain>
    </source>
</reference>
<reference key="2">
    <citation type="journal article" date="2018" name="Science">
        <title>Systematic discovery of antiphage defense systems in the microbial pangenome.</title>
        <authorList>
            <person name="Doron S."/>
            <person name="Melamed S."/>
            <person name="Ofir G."/>
            <person name="Leavitt A."/>
            <person name="Lopatina A."/>
            <person name="Keren M."/>
            <person name="Amitai G."/>
            <person name="Sorek R."/>
        </authorList>
    </citation>
    <scope>FUNCTION</scope>
    <scope>DISRUPTION PHENOTYPE</scope>
    <scope>MUTAGENESIS OF GLU-400 AND HIS-443</scope>
    <source>
        <strain>E24377A / ETEC</strain>
    </source>
</reference>
<name>ZORC_ECO24</name>
<evidence type="ECO:0000269" key="1">
    <source>
    </source>
</evidence>
<evidence type="ECO:0000303" key="2">
    <source>
    </source>
</evidence>
<evidence type="ECO:0000305" key="3">
    <source>
    </source>
</evidence>
<evidence type="ECO:0000312" key="4">
    <source>
        <dbReference type="EMBL" id="ABV16709.1"/>
    </source>
</evidence>
<gene>
    <name evidence="2" type="primary">zorC</name>
    <name evidence="4" type="ordered locus">EcE24377A_0283</name>
</gene>
<proteinExistence type="evidence at protein level"/>